<feature type="chain" id="PRO_1000012615" description="ATP-dependent protease subunit HslV">
    <location>
        <begin position="1"/>
        <end position="175"/>
    </location>
</feature>
<feature type="active site" evidence="1">
    <location>
        <position position="2"/>
    </location>
</feature>
<feature type="binding site" evidence="1">
    <location>
        <position position="158"/>
    </location>
    <ligand>
        <name>Na(+)</name>
        <dbReference type="ChEBI" id="CHEBI:29101"/>
    </ligand>
</feature>
<feature type="binding site" evidence="1">
    <location>
        <position position="161"/>
    </location>
    <ligand>
        <name>Na(+)</name>
        <dbReference type="ChEBI" id="CHEBI:29101"/>
    </ligand>
</feature>
<feature type="binding site" evidence="1">
    <location>
        <position position="164"/>
    </location>
    <ligand>
        <name>Na(+)</name>
        <dbReference type="ChEBI" id="CHEBI:29101"/>
    </ligand>
</feature>
<gene>
    <name evidence="1" type="primary">hslV</name>
    <name type="ordered locus">CGSHiEE_00515</name>
</gene>
<sequence length="175" mass="19026">MTTIVSVRRKGQVVVGGDGQVSLGNTVMKGNARKVRRLYNGKVLAGFAGGTADAFTLFELFERKLEMHQGHLLKSAVELAKDWRTDRALRKLEAMLIVADEKESLIITGIGDVVQPEEDQILAIGSGGNYALSAARALVENTELSAHEIVEKSLRIAGDICVFTNTNFTIEELPN</sequence>
<name>HSLV_HAEIE</name>
<dbReference type="EC" id="3.4.25.2" evidence="1"/>
<dbReference type="EMBL" id="CP000671">
    <property type="protein sequence ID" value="ABQ97597.1"/>
    <property type="molecule type" value="Genomic_DNA"/>
</dbReference>
<dbReference type="SMR" id="A5U9Z6"/>
<dbReference type="MEROPS" id="T01.006"/>
<dbReference type="KEGG" id="hip:CGSHiEE_00515"/>
<dbReference type="HOGENOM" id="CLU_093872_1_0_6"/>
<dbReference type="GO" id="GO:0009376">
    <property type="term" value="C:HslUV protease complex"/>
    <property type="evidence" value="ECO:0007669"/>
    <property type="project" value="UniProtKB-UniRule"/>
</dbReference>
<dbReference type="GO" id="GO:0005839">
    <property type="term" value="C:proteasome core complex"/>
    <property type="evidence" value="ECO:0007669"/>
    <property type="project" value="InterPro"/>
</dbReference>
<dbReference type="GO" id="GO:0046872">
    <property type="term" value="F:metal ion binding"/>
    <property type="evidence" value="ECO:0007669"/>
    <property type="project" value="UniProtKB-KW"/>
</dbReference>
<dbReference type="GO" id="GO:0004298">
    <property type="term" value="F:threonine-type endopeptidase activity"/>
    <property type="evidence" value="ECO:0007669"/>
    <property type="project" value="UniProtKB-KW"/>
</dbReference>
<dbReference type="GO" id="GO:0051603">
    <property type="term" value="P:proteolysis involved in protein catabolic process"/>
    <property type="evidence" value="ECO:0007669"/>
    <property type="project" value="InterPro"/>
</dbReference>
<dbReference type="CDD" id="cd01913">
    <property type="entry name" value="protease_HslV"/>
    <property type="match status" value="1"/>
</dbReference>
<dbReference type="FunFam" id="3.60.20.10:FF:000002">
    <property type="entry name" value="ATP-dependent protease subunit HslV"/>
    <property type="match status" value="1"/>
</dbReference>
<dbReference type="Gene3D" id="3.60.20.10">
    <property type="entry name" value="Glutamine Phosphoribosylpyrophosphate, subunit 1, domain 1"/>
    <property type="match status" value="1"/>
</dbReference>
<dbReference type="HAMAP" id="MF_00248">
    <property type="entry name" value="HslV"/>
    <property type="match status" value="1"/>
</dbReference>
<dbReference type="InterPro" id="IPR022281">
    <property type="entry name" value="ATP-dep_Prtase_HsIV_su"/>
</dbReference>
<dbReference type="InterPro" id="IPR029055">
    <property type="entry name" value="Ntn_hydrolases_N"/>
</dbReference>
<dbReference type="InterPro" id="IPR001353">
    <property type="entry name" value="Proteasome_sua/b"/>
</dbReference>
<dbReference type="InterPro" id="IPR023333">
    <property type="entry name" value="Proteasome_suB-type"/>
</dbReference>
<dbReference type="NCBIfam" id="TIGR03692">
    <property type="entry name" value="ATP_dep_HslV"/>
    <property type="match status" value="1"/>
</dbReference>
<dbReference type="NCBIfam" id="NF003964">
    <property type="entry name" value="PRK05456.1"/>
    <property type="match status" value="1"/>
</dbReference>
<dbReference type="PANTHER" id="PTHR32194:SF0">
    <property type="entry name" value="ATP-DEPENDENT PROTEASE SUBUNIT HSLV"/>
    <property type="match status" value="1"/>
</dbReference>
<dbReference type="PANTHER" id="PTHR32194">
    <property type="entry name" value="METALLOPROTEASE TLDD"/>
    <property type="match status" value="1"/>
</dbReference>
<dbReference type="Pfam" id="PF00227">
    <property type="entry name" value="Proteasome"/>
    <property type="match status" value="1"/>
</dbReference>
<dbReference type="PIRSF" id="PIRSF039093">
    <property type="entry name" value="HslV"/>
    <property type="match status" value="1"/>
</dbReference>
<dbReference type="SUPFAM" id="SSF56235">
    <property type="entry name" value="N-terminal nucleophile aminohydrolases (Ntn hydrolases)"/>
    <property type="match status" value="1"/>
</dbReference>
<dbReference type="PROSITE" id="PS51476">
    <property type="entry name" value="PROTEASOME_BETA_2"/>
    <property type="match status" value="1"/>
</dbReference>
<proteinExistence type="inferred from homology"/>
<evidence type="ECO:0000255" key="1">
    <source>
        <dbReference type="HAMAP-Rule" id="MF_00248"/>
    </source>
</evidence>
<organism>
    <name type="scientific">Haemophilus influenzae (strain PittEE)</name>
    <dbReference type="NCBI Taxonomy" id="374930"/>
    <lineage>
        <taxon>Bacteria</taxon>
        <taxon>Pseudomonadati</taxon>
        <taxon>Pseudomonadota</taxon>
        <taxon>Gammaproteobacteria</taxon>
        <taxon>Pasteurellales</taxon>
        <taxon>Pasteurellaceae</taxon>
        <taxon>Haemophilus</taxon>
    </lineage>
</organism>
<reference key="1">
    <citation type="journal article" date="2007" name="Genome Biol.">
        <title>Characterization and modeling of the Haemophilus influenzae core and supragenomes based on the complete genomic sequences of Rd and 12 clinical nontypeable strains.</title>
        <authorList>
            <person name="Hogg J.S."/>
            <person name="Hu F.Z."/>
            <person name="Janto B."/>
            <person name="Boissy R."/>
            <person name="Hayes J."/>
            <person name="Keefe R."/>
            <person name="Post J.C."/>
            <person name="Ehrlich G.D."/>
        </authorList>
    </citation>
    <scope>NUCLEOTIDE SEQUENCE [LARGE SCALE GENOMIC DNA]</scope>
    <source>
        <strain>PittEE</strain>
    </source>
</reference>
<protein>
    <recommendedName>
        <fullName evidence="1">ATP-dependent protease subunit HslV</fullName>
        <ecNumber evidence="1">3.4.25.2</ecNumber>
    </recommendedName>
</protein>
<accession>A5U9Z6</accession>
<keyword id="KW-0021">Allosteric enzyme</keyword>
<keyword id="KW-0963">Cytoplasm</keyword>
<keyword id="KW-0378">Hydrolase</keyword>
<keyword id="KW-0479">Metal-binding</keyword>
<keyword id="KW-0645">Protease</keyword>
<keyword id="KW-0915">Sodium</keyword>
<keyword id="KW-0888">Threonine protease</keyword>
<comment type="function">
    <text evidence="1">Protease subunit of a proteasome-like degradation complex believed to be a general protein degrading machinery.</text>
</comment>
<comment type="catalytic activity">
    <reaction evidence="1">
        <text>ATP-dependent cleavage of peptide bonds with broad specificity.</text>
        <dbReference type="EC" id="3.4.25.2"/>
    </reaction>
</comment>
<comment type="activity regulation">
    <text evidence="1">Allosterically activated by HslU binding.</text>
</comment>
<comment type="subunit">
    <text evidence="1">A double ring-shaped homohexamer of HslV is capped on each side by a ring-shaped HslU homohexamer. The assembly of the HslU/HslV complex is dependent on binding of ATP.</text>
</comment>
<comment type="subcellular location">
    <subcellularLocation>
        <location evidence="1">Cytoplasm</location>
    </subcellularLocation>
</comment>
<comment type="similarity">
    <text evidence="1">Belongs to the peptidase T1B family. HslV subfamily.</text>
</comment>